<gene>
    <name evidence="1" type="primary">hrcA</name>
    <name type="ordered locus">Lxx14650</name>
</gene>
<dbReference type="EMBL" id="AE016822">
    <property type="protein sequence ID" value="AAT89277.1"/>
    <property type="molecule type" value="Genomic_DNA"/>
</dbReference>
<dbReference type="RefSeq" id="WP_011186268.1">
    <property type="nucleotide sequence ID" value="NC_006087.1"/>
</dbReference>
<dbReference type="SMR" id="Q6AEB9"/>
<dbReference type="STRING" id="281090.Lxx14650"/>
<dbReference type="KEGG" id="lxx:Lxx14650"/>
<dbReference type="eggNOG" id="COG1420">
    <property type="taxonomic scope" value="Bacteria"/>
</dbReference>
<dbReference type="HOGENOM" id="CLU_050019_2_0_11"/>
<dbReference type="Proteomes" id="UP000001306">
    <property type="component" value="Chromosome"/>
</dbReference>
<dbReference type="GO" id="GO:0003677">
    <property type="term" value="F:DNA binding"/>
    <property type="evidence" value="ECO:0007669"/>
    <property type="project" value="InterPro"/>
</dbReference>
<dbReference type="GO" id="GO:0045892">
    <property type="term" value="P:negative regulation of DNA-templated transcription"/>
    <property type="evidence" value="ECO:0007669"/>
    <property type="project" value="UniProtKB-UniRule"/>
</dbReference>
<dbReference type="FunFam" id="1.10.10.10:FF:000049">
    <property type="entry name" value="Heat-inducible transcription repressor HrcA"/>
    <property type="match status" value="1"/>
</dbReference>
<dbReference type="Gene3D" id="3.30.450.40">
    <property type="match status" value="1"/>
</dbReference>
<dbReference type="Gene3D" id="3.30.390.60">
    <property type="entry name" value="Heat-inducible transcription repressor hrca homolog, domain 3"/>
    <property type="match status" value="1"/>
</dbReference>
<dbReference type="Gene3D" id="1.10.10.10">
    <property type="entry name" value="Winged helix-like DNA-binding domain superfamily/Winged helix DNA-binding domain"/>
    <property type="match status" value="1"/>
</dbReference>
<dbReference type="HAMAP" id="MF_00081">
    <property type="entry name" value="HrcA"/>
    <property type="match status" value="1"/>
</dbReference>
<dbReference type="InterPro" id="IPR029016">
    <property type="entry name" value="GAF-like_dom_sf"/>
</dbReference>
<dbReference type="InterPro" id="IPR002571">
    <property type="entry name" value="HrcA"/>
</dbReference>
<dbReference type="InterPro" id="IPR021153">
    <property type="entry name" value="HrcA_C"/>
</dbReference>
<dbReference type="InterPro" id="IPR036388">
    <property type="entry name" value="WH-like_DNA-bd_sf"/>
</dbReference>
<dbReference type="InterPro" id="IPR036390">
    <property type="entry name" value="WH_DNA-bd_sf"/>
</dbReference>
<dbReference type="InterPro" id="IPR023120">
    <property type="entry name" value="WHTH_transcript_rep_HrcA_IDD"/>
</dbReference>
<dbReference type="NCBIfam" id="TIGR00331">
    <property type="entry name" value="hrcA"/>
    <property type="match status" value="1"/>
</dbReference>
<dbReference type="PANTHER" id="PTHR34824">
    <property type="entry name" value="HEAT-INDUCIBLE TRANSCRIPTION REPRESSOR HRCA"/>
    <property type="match status" value="1"/>
</dbReference>
<dbReference type="PANTHER" id="PTHR34824:SF1">
    <property type="entry name" value="HEAT-INDUCIBLE TRANSCRIPTION REPRESSOR HRCA"/>
    <property type="match status" value="1"/>
</dbReference>
<dbReference type="Pfam" id="PF01628">
    <property type="entry name" value="HrcA"/>
    <property type="match status" value="1"/>
</dbReference>
<dbReference type="PIRSF" id="PIRSF005485">
    <property type="entry name" value="HrcA"/>
    <property type="match status" value="1"/>
</dbReference>
<dbReference type="SUPFAM" id="SSF55781">
    <property type="entry name" value="GAF domain-like"/>
    <property type="match status" value="1"/>
</dbReference>
<dbReference type="SUPFAM" id="SSF46785">
    <property type="entry name" value="Winged helix' DNA-binding domain"/>
    <property type="match status" value="1"/>
</dbReference>
<keyword id="KW-1185">Reference proteome</keyword>
<keyword id="KW-0678">Repressor</keyword>
<keyword id="KW-0346">Stress response</keyword>
<keyword id="KW-0804">Transcription</keyword>
<keyword id="KW-0805">Transcription regulation</keyword>
<name>HRCA_LEIXX</name>
<protein>
    <recommendedName>
        <fullName evidence="1">Heat-inducible transcription repressor HrcA</fullName>
    </recommendedName>
</protein>
<feature type="chain" id="PRO_0000182492" description="Heat-inducible transcription repressor HrcA">
    <location>
        <begin position="1"/>
        <end position="339"/>
    </location>
</feature>
<reference key="1">
    <citation type="journal article" date="2004" name="Mol. Plant Microbe Interact.">
        <title>The genome sequence of the Gram-positive sugarcane pathogen Leifsonia xyli subsp. xyli.</title>
        <authorList>
            <person name="Monteiro-Vitorello C.B."/>
            <person name="Camargo L.E.A."/>
            <person name="Van Sluys M.A."/>
            <person name="Kitajima J.P."/>
            <person name="Truffi D."/>
            <person name="do Amaral A.M."/>
            <person name="Harakava R."/>
            <person name="de Oliveira J.C.F."/>
            <person name="Wood D."/>
            <person name="de Oliveira M.C."/>
            <person name="Miyaki C.Y."/>
            <person name="Takita M.A."/>
            <person name="da Silva A.C.R."/>
            <person name="Furlan L.R."/>
            <person name="Carraro D.M."/>
            <person name="Camarotte G."/>
            <person name="Almeida N.F. Jr."/>
            <person name="Carrer H."/>
            <person name="Coutinho L.L."/>
            <person name="El-Dorry H.A."/>
            <person name="Ferro M.I.T."/>
            <person name="Gagliardi P.R."/>
            <person name="Giglioti E."/>
            <person name="Goldman M.H.S."/>
            <person name="Goldman G.H."/>
            <person name="Kimura E.T."/>
            <person name="Ferro E.S."/>
            <person name="Kuramae E.E."/>
            <person name="Lemos E.G.M."/>
            <person name="Lemos M.V.F."/>
            <person name="Mauro S.M.Z."/>
            <person name="Machado M.A."/>
            <person name="Marino C.L."/>
            <person name="Menck C.F."/>
            <person name="Nunes L.R."/>
            <person name="Oliveira R.C."/>
            <person name="Pereira G.G."/>
            <person name="Siqueira W."/>
            <person name="de Souza A.A."/>
            <person name="Tsai S.M."/>
            <person name="Zanca A.S."/>
            <person name="Simpson A.J.G."/>
            <person name="Brumbley S.M."/>
            <person name="Setubal J.C."/>
        </authorList>
    </citation>
    <scope>NUCLEOTIDE SEQUENCE [LARGE SCALE GENOMIC DNA]</scope>
    <source>
        <strain>CTCB07</strain>
    </source>
</reference>
<accession>Q6AEB9</accession>
<comment type="function">
    <text evidence="1">Negative regulator of class I heat shock genes (grpE-dnaK-dnaJ and groELS operons). Prevents heat-shock induction of these operons.</text>
</comment>
<comment type="similarity">
    <text evidence="1">Belongs to the HrcA family.</text>
</comment>
<organism>
    <name type="scientific">Leifsonia xyli subsp. xyli (strain CTCB07)</name>
    <dbReference type="NCBI Taxonomy" id="281090"/>
    <lineage>
        <taxon>Bacteria</taxon>
        <taxon>Bacillati</taxon>
        <taxon>Actinomycetota</taxon>
        <taxon>Actinomycetes</taxon>
        <taxon>Micrococcales</taxon>
        <taxon>Microbacteriaceae</taxon>
        <taxon>Leifsonia</taxon>
    </lineage>
</organism>
<evidence type="ECO:0000255" key="1">
    <source>
        <dbReference type="HAMAP-Rule" id="MF_00081"/>
    </source>
</evidence>
<proteinExistence type="inferred from homology"/>
<sequence length="339" mass="36328">MVSERSLDVLRAIVQDYVSSCEPVGSKSIVERHSFGVSAATIRNDMALLEEEELIAAPHTSSGRIPTDKGYRLFVDHLAEARPLSPAQRTAIEILLGQSVDLDDVLSRTVRLLSQLTNQTAIVQYPSLSRSRIRHIELVSLAPRRLLSVLITDSGAVEQRVIELTDELAEADIAEIRGAINGAAAGLSLADAAVRLSELPDALADRARALVAPVASALLDQIAANRQDRLMMAGAANLVRTGDDFPSSITPVLEAIEEQVVLLRLFDEMAHDQHSVAVSIGRENDGFGLTEASVMSSGYSSAGADIARVGLIGPLRMDYSGNMAAVRAVARYLSRLLGD</sequence>